<comment type="function">
    <text>HPTA is an acidic heparin-binding growth factor for hepatocytes.</text>
</comment>
<comment type="subunit">
    <text>Heterodimer of a heavy and a light chain linked by disulfide bond(s).</text>
</comment>
<proteinExistence type="evidence at protein level"/>
<reference key="1">
    <citation type="journal article" date="1989" name="Biochem. Biophys. Res. Commun.">
        <title>NH2-terminal amino acid sequence of rabbit hepatopoietin A, a heparin-binding polypeptide growth factor for hepatocytes.</title>
        <authorList>
            <person name="Zarnegar R."/>
            <person name="Muga S."/>
            <person name="Enghild J."/>
            <person name="Michalopoulos G."/>
        </authorList>
    </citation>
    <scope>PROTEIN SEQUENCE</scope>
</reference>
<organism>
    <name type="scientific">Oryctolagus cuniculus</name>
    <name type="common">Rabbit</name>
    <dbReference type="NCBI Taxonomy" id="9986"/>
    <lineage>
        <taxon>Eukaryota</taxon>
        <taxon>Metazoa</taxon>
        <taxon>Chordata</taxon>
        <taxon>Craniata</taxon>
        <taxon>Vertebrata</taxon>
        <taxon>Euteleostomi</taxon>
        <taxon>Mammalia</taxon>
        <taxon>Eutheria</taxon>
        <taxon>Euarchontoglires</taxon>
        <taxon>Glires</taxon>
        <taxon>Lagomorpha</taxon>
        <taxon>Leporidae</taxon>
        <taxon>Oryctolagus</taxon>
    </lineage>
</organism>
<feature type="chain" id="PRO_0000084059" description="Heptapoietin A light chain">
    <location>
        <begin position="1"/>
        <end position="24" status="greater than"/>
    </location>
</feature>
<feature type="non-terminal residue">
    <location>
        <position position="24"/>
    </location>
</feature>
<accession>P13571</accession>
<sequence length="24" mass="2768">VVNGKPTRTNVGRMVSLKYRNKHI</sequence>
<dbReference type="PIR" id="A33262">
    <property type="entry name" value="A33262"/>
</dbReference>
<dbReference type="STRING" id="9986.ENSOCUP00000030750"/>
<dbReference type="PaxDb" id="9986-ENSOCUP00000001389"/>
<dbReference type="eggNOG" id="ENOG502QR40">
    <property type="taxonomic scope" value="Eukaryota"/>
</dbReference>
<dbReference type="InParanoid" id="P13571"/>
<dbReference type="Proteomes" id="UP000001811">
    <property type="component" value="Unplaced"/>
</dbReference>
<dbReference type="GO" id="GO:0008083">
    <property type="term" value="F:growth factor activity"/>
    <property type="evidence" value="ECO:0007669"/>
    <property type="project" value="UniProtKB-KW"/>
</dbReference>
<dbReference type="GO" id="GO:0008201">
    <property type="term" value="F:heparin binding"/>
    <property type="evidence" value="ECO:0007669"/>
    <property type="project" value="UniProtKB-KW"/>
</dbReference>
<protein>
    <recommendedName>
        <fullName>Heptapoietin A light chain</fullName>
        <shortName>HPTA</shortName>
    </recommendedName>
</protein>
<keyword id="KW-0903">Direct protein sequencing</keyword>
<keyword id="KW-1015">Disulfide bond</keyword>
<keyword id="KW-0339">Growth factor</keyword>
<keyword id="KW-0358">Heparin-binding</keyword>
<keyword id="KW-1185">Reference proteome</keyword>
<name>HPTA_RABIT</name>